<comment type="function">
    <text evidence="2">This excitatory toxin inhibits insect calcium-activated potassium (KCa) channels (Slo-type).</text>
</comment>
<comment type="subcellular location">
    <subcellularLocation>
        <location evidence="2">Secreted</location>
    </subcellularLocation>
</comment>
<comment type="tissue specificity">
    <text evidence="6">Expressed by the venom gland.</text>
</comment>
<comment type="domain">
    <text evidence="1">The presence of a 'disulfide through disulfide knot' structurally defines this protein as a knottin.</text>
</comment>
<comment type="similarity">
    <text evidence="4">Belongs to the neurotoxin 11 (kappa toxin) family.</text>
</comment>
<comment type="caution">
    <text evidence="5">This toxin has the prefix lambda in its name (instead of kappa), since lambda is the Greek letter attributed to calcium-activated potassium (KCa) channel impairing toxins (according to the nomenclature of King et al., 2008).</text>
</comment>
<accession>S0F1P1</accession>
<organism>
    <name type="scientific">Hadronyche versuta</name>
    <name type="common">Blue mountains funnel-web spider</name>
    <name type="synonym">Atrax versutus</name>
    <dbReference type="NCBI Taxonomy" id="6904"/>
    <lineage>
        <taxon>Eukaryota</taxon>
        <taxon>Metazoa</taxon>
        <taxon>Ecdysozoa</taxon>
        <taxon>Arthropoda</taxon>
        <taxon>Chelicerata</taxon>
        <taxon>Arachnida</taxon>
        <taxon>Araneae</taxon>
        <taxon>Mygalomorphae</taxon>
        <taxon>Hexathelidae</taxon>
        <taxon>Hadronyche</taxon>
    </lineage>
</organism>
<sequence length="74" mass="7724">MNTATCFIVLLVVATVIGGIEAGESDMRKDVMGLFRRVICTGADSPCAACCPCCPGTSCKAESNGVSYCRKDEP</sequence>
<evidence type="ECO:0000250" key="1"/>
<evidence type="ECO:0000250" key="2">
    <source>
        <dbReference type="UniProtKB" id="P82228"/>
    </source>
</evidence>
<evidence type="ECO:0000255" key="3"/>
<evidence type="ECO:0000303" key="4">
    <source>
    </source>
</evidence>
<evidence type="ECO:0000305" key="5"/>
<evidence type="ECO:0000305" key="6">
    <source>
    </source>
</evidence>
<proteinExistence type="inferred from homology"/>
<protein>
    <recommendedName>
        <fullName evidence="5">Lambda-hexatoxin-Hv1d</fullName>
        <shortName evidence="5">Lambda-HXTX-Hv1d</shortName>
    </recommendedName>
    <alternativeName>
        <fullName evidence="4">Kappa-hexatoxin-Hv1d</fullName>
    </alternativeName>
</protein>
<name>TK1D_HADVE</name>
<feature type="signal peptide" evidence="3">
    <location>
        <begin position="1"/>
        <end position="22"/>
    </location>
</feature>
<feature type="propeptide" id="PRO_0000430923" evidence="1">
    <location>
        <begin position="23"/>
        <end position="35"/>
    </location>
</feature>
<feature type="peptide" id="PRO_0000430924" description="Lambda-hexatoxin-Hv1d">
    <location>
        <begin position="38"/>
        <end position="74"/>
    </location>
</feature>
<feature type="site" description="Important for the neurotoxic activity" evidence="1">
    <location>
        <position position="39"/>
    </location>
</feature>
<feature type="site" description="Critical for the neurotoxic activity" evidence="1">
    <location>
        <position position="46"/>
    </location>
</feature>
<feature type="site" description="Critical for the neurotoxic activity" evidence="1">
    <location>
        <position position="50"/>
    </location>
</feature>
<feature type="site" description="Critical for the neurotoxic activity" evidence="1">
    <location>
        <position position="51"/>
    </location>
</feature>
<feature type="site" description="Important for the neurotoxic activity" evidence="1">
    <location>
        <position position="66"/>
    </location>
</feature>
<feature type="site" description="Critical for the neurotoxic activity" evidence="1">
    <location>
        <position position="68"/>
    </location>
</feature>
<feature type="disulfide bond" evidence="1">
    <location>
        <begin position="40"/>
        <end position="54"/>
    </location>
</feature>
<feature type="disulfide bond" evidence="1">
    <location>
        <begin position="47"/>
        <end position="59"/>
    </location>
</feature>
<feature type="disulfide bond" evidence="1">
    <location>
        <begin position="50"/>
        <end position="51"/>
    </location>
</feature>
<feature type="disulfide bond" evidence="1">
    <location>
        <begin position="53"/>
        <end position="69"/>
    </location>
</feature>
<keyword id="KW-1221">Calcium-activated potassium channel impairing toxin</keyword>
<keyword id="KW-0165">Cleavage on pair of basic residues</keyword>
<keyword id="KW-1015">Disulfide bond</keyword>
<keyword id="KW-0872">Ion channel impairing toxin</keyword>
<keyword id="KW-0960">Knottin</keyword>
<keyword id="KW-0528">Neurotoxin</keyword>
<keyword id="KW-0632">Potassium channel impairing toxin</keyword>
<keyword id="KW-0964">Secreted</keyword>
<keyword id="KW-0732">Signal</keyword>
<keyword id="KW-0800">Toxin</keyword>
<dbReference type="EMBL" id="HG001311">
    <property type="protein sequence ID" value="CDF44172.1"/>
    <property type="molecule type" value="mRNA"/>
</dbReference>
<dbReference type="SMR" id="S0F1P1"/>
<dbReference type="GO" id="GO:0005576">
    <property type="term" value="C:extracellular region"/>
    <property type="evidence" value="ECO:0007669"/>
    <property type="project" value="UniProtKB-SubCell"/>
</dbReference>
<dbReference type="GO" id="GO:0015459">
    <property type="term" value="F:potassium channel regulator activity"/>
    <property type="evidence" value="ECO:0007669"/>
    <property type="project" value="UniProtKB-KW"/>
</dbReference>
<dbReference type="GO" id="GO:0090729">
    <property type="term" value="F:toxin activity"/>
    <property type="evidence" value="ECO:0007669"/>
    <property type="project" value="UniProtKB-KW"/>
</dbReference>
<dbReference type="InterPro" id="IPR012499">
    <property type="entry name" value="Toxin_16"/>
</dbReference>
<dbReference type="Pfam" id="PF07945">
    <property type="entry name" value="Toxin_16"/>
    <property type="match status" value="1"/>
</dbReference>
<dbReference type="SUPFAM" id="SSF57059">
    <property type="entry name" value="omega toxin-like"/>
    <property type="match status" value="1"/>
</dbReference>
<dbReference type="PROSITE" id="PS60020">
    <property type="entry name" value="J_ACTX"/>
    <property type="match status" value="1"/>
</dbReference>
<reference key="1">
    <citation type="journal article" date="2014" name="BMC Genomics">
        <title>Diversification of a single ancestral gene into a successful toxin superfamily in highly venomous Australian funnel-web spiders.</title>
        <authorList>
            <person name="Pineda S.S."/>
            <person name="Sollod B.L."/>
            <person name="Wilson D."/>
            <person name="Darling A."/>
            <person name="Sunagar K."/>
            <person name="Undheim E.A."/>
            <person name="Kely L."/>
            <person name="Antunes A."/>
            <person name="Fry B.G."/>
            <person name="King G.F."/>
        </authorList>
    </citation>
    <scope>NUCLEOTIDE SEQUENCE [MRNA]</scope>
    <source>
        <tissue>Venom gland</tissue>
    </source>
</reference>